<sequence>MIGKSLLTFSTLNEGILLKRYKRFLADVELDTGHIVTAHCANTGPMTGVLKPGGRVRVRYAPSPSRKLSWSWEQAQVVNQAGNRIWVGVNTALPNKIVRLAIEAGCFREALGEIARIRNEVKYGRTGNSRIDLLLTPGENNCDQRQIFLEIKNTTWTDGSLALFPDTVTERGQKHLQEMIDVLPNARALLVPCISRNDVDLFAPGDAADPIYGNLFRQALSEGVEVMPCCFGFFSDHITWEGMRPFRETQTIFPLP</sequence>
<accession>A9BDN4</accession>
<protein>
    <recommendedName>
        <fullName evidence="1">Sugar fermentation stimulation protein homolog</fullName>
    </recommendedName>
</protein>
<proteinExistence type="inferred from homology"/>
<organism>
    <name type="scientific">Prochlorococcus marinus (strain MIT 9211)</name>
    <dbReference type="NCBI Taxonomy" id="93059"/>
    <lineage>
        <taxon>Bacteria</taxon>
        <taxon>Bacillati</taxon>
        <taxon>Cyanobacteriota</taxon>
        <taxon>Cyanophyceae</taxon>
        <taxon>Synechococcales</taxon>
        <taxon>Prochlorococcaceae</taxon>
        <taxon>Prochlorococcus</taxon>
    </lineage>
</organism>
<gene>
    <name evidence="1" type="primary">sfsA</name>
    <name type="ordered locus">P9211_02891</name>
</gene>
<dbReference type="EMBL" id="CP000878">
    <property type="protein sequence ID" value="ABX08220.1"/>
    <property type="molecule type" value="Genomic_DNA"/>
</dbReference>
<dbReference type="RefSeq" id="WP_012194845.1">
    <property type="nucleotide sequence ID" value="NC_009976.1"/>
</dbReference>
<dbReference type="SMR" id="A9BDN4"/>
<dbReference type="STRING" id="93059.P9211_02891"/>
<dbReference type="KEGG" id="pmj:P9211_02891"/>
<dbReference type="eggNOG" id="COG1489">
    <property type="taxonomic scope" value="Bacteria"/>
</dbReference>
<dbReference type="HOGENOM" id="CLU_052299_2_0_3"/>
<dbReference type="OrthoDB" id="9802365at2"/>
<dbReference type="Proteomes" id="UP000000788">
    <property type="component" value="Chromosome"/>
</dbReference>
<dbReference type="GO" id="GO:0003677">
    <property type="term" value="F:DNA binding"/>
    <property type="evidence" value="ECO:0007669"/>
    <property type="project" value="InterPro"/>
</dbReference>
<dbReference type="CDD" id="cd22359">
    <property type="entry name" value="SfsA-like_bacterial"/>
    <property type="match status" value="1"/>
</dbReference>
<dbReference type="Gene3D" id="2.40.50.580">
    <property type="match status" value="1"/>
</dbReference>
<dbReference type="Gene3D" id="3.40.1350.60">
    <property type="match status" value="1"/>
</dbReference>
<dbReference type="HAMAP" id="MF_00095">
    <property type="entry name" value="SfsA"/>
    <property type="match status" value="1"/>
</dbReference>
<dbReference type="InterPro" id="IPR005224">
    <property type="entry name" value="SfsA"/>
</dbReference>
<dbReference type="InterPro" id="IPR040452">
    <property type="entry name" value="SfsA_C"/>
</dbReference>
<dbReference type="InterPro" id="IPR041465">
    <property type="entry name" value="SfsA_N"/>
</dbReference>
<dbReference type="NCBIfam" id="TIGR00230">
    <property type="entry name" value="sfsA"/>
    <property type="match status" value="1"/>
</dbReference>
<dbReference type="PANTHER" id="PTHR30545">
    <property type="entry name" value="SUGAR FERMENTATION STIMULATION PROTEIN A"/>
    <property type="match status" value="1"/>
</dbReference>
<dbReference type="PANTHER" id="PTHR30545:SF2">
    <property type="entry name" value="SUGAR FERMENTATION STIMULATION PROTEIN A"/>
    <property type="match status" value="1"/>
</dbReference>
<dbReference type="Pfam" id="PF03749">
    <property type="entry name" value="SfsA"/>
    <property type="match status" value="1"/>
</dbReference>
<dbReference type="Pfam" id="PF17746">
    <property type="entry name" value="SfsA_N"/>
    <property type="match status" value="1"/>
</dbReference>
<feature type="chain" id="PRO_1000093581" description="Sugar fermentation stimulation protein homolog">
    <location>
        <begin position="1"/>
        <end position="256"/>
    </location>
</feature>
<evidence type="ECO:0000255" key="1">
    <source>
        <dbReference type="HAMAP-Rule" id="MF_00095"/>
    </source>
</evidence>
<name>SFSA_PROM4</name>
<comment type="similarity">
    <text evidence="1">Belongs to the SfsA family.</text>
</comment>
<keyword id="KW-1185">Reference proteome</keyword>
<reference key="1">
    <citation type="journal article" date="2007" name="PLoS Genet.">
        <title>Patterns and implications of gene gain and loss in the evolution of Prochlorococcus.</title>
        <authorList>
            <person name="Kettler G.C."/>
            <person name="Martiny A.C."/>
            <person name="Huang K."/>
            <person name="Zucker J."/>
            <person name="Coleman M.L."/>
            <person name="Rodrigue S."/>
            <person name="Chen F."/>
            <person name="Lapidus A."/>
            <person name="Ferriera S."/>
            <person name="Johnson J."/>
            <person name="Steglich C."/>
            <person name="Church G.M."/>
            <person name="Richardson P."/>
            <person name="Chisholm S.W."/>
        </authorList>
    </citation>
    <scope>NUCLEOTIDE SEQUENCE [LARGE SCALE GENOMIC DNA]</scope>
    <source>
        <strain>MIT 9211</strain>
    </source>
</reference>